<protein>
    <recommendedName>
        <fullName>Alpha-amylase type B isozyme</fullName>
        <ecNumber evidence="2">3.2.1.1</ecNumber>
    </recommendedName>
    <alternativeName>
        <fullName>1,4-alpha-D-glucan glucanohydrolase</fullName>
    </alternativeName>
    <alternativeName>
        <fullName>Clones GRAMY56 and 963</fullName>
    </alternativeName>
</protein>
<comment type="catalytic activity">
    <reaction evidence="2">
        <text>Endohydrolysis of (1-&gt;4)-alpha-D-glucosidic linkages in polysaccharides containing three or more (1-&gt;4)-alpha-linked D-glucose units.</text>
        <dbReference type="EC" id="3.2.1.1"/>
    </reaction>
</comment>
<comment type="cofactor">
    <cofactor evidence="2">
        <name>Ca(2+)</name>
        <dbReference type="ChEBI" id="CHEBI:29108"/>
    </cofactor>
    <text evidence="2">Binds 3 Ca(2+) ions per subunit.</text>
</comment>
<comment type="subunit">
    <text evidence="1">Monomer.</text>
</comment>
<comment type="developmental stage">
    <text>Production of alpha-amylase is hormonally regulated. Germinating embryos produce the hormone gibberellic acid, which within 10 hours stimulates the aleurone cells covering the endosperm of the seed to produce alpha-amylase. The enzyme then degrades the starch within the endosperm for use by the developing plant embryo.</text>
</comment>
<comment type="miscellaneous">
    <text>There are at least 4 types of alpha-amylase in barley.</text>
</comment>
<comment type="miscellaneous">
    <text>Type B isozyme mRNA is undetectable in unstimulated cells and increases a hundred-fold after stimulation with gibberellic acid.</text>
</comment>
<comment type="miscellaneous">
    <text evidence="1">Binds starch not only at the active site, but also via accessory binding sites on the protein surface that are important for efficient binding to starch granules and thereby increase enzyme activity.</text>
</comment>
<comment type="similarity">
    <text evidence="4">Belongs to the glycosyl hydrolase 13 family.</text>
</comment>
<gene>
    <name type="primary">AMY1.6</name>
</gene>
<accession>P04750</accession>
<evidence type="ECO:0000250" key="1"/>
<evidence type="ECO:0000250" key="2">
    <source>
        <dbReference type="UniProtKB" id="P00693"/>
    </source>
</evidence>
<evidence type="ECO:0000250" key="3">
    <source>
        <dbReference type="UniProtKB" id="P04063"/>
    </source>
</evidence>
<evidence type="ECO:0000305" key="4"/>
<proteinExistence type="evidence at transcript level"/>
<keyword id="KW-0106">Calcium</keyword>
<keyword id="KW-0119">Carbohydrate metabolism</keyword>
<keyword id="KW-0309">Germination</keyword>
<keyword id="KW-0326">Glycosidase</keyword>
<keyword id="KW-0378">Hydrolase</keyword>
<keyword id="KW-0479">Metal-binding</keyword>
<keyword id="KW-0732">Signal</keyword>
<dbReference type="EC" id="3.2.1.1" evidence="2"/>
<dbReference type="EMBL" id="X15227">
    <property type="protein sequence ID" value="CAA33299.1"/>
    <property type="molecule type" value="Genomic_DNA"/>
</dbReference>
<dbReference type="EMBL" id="K02636">
    <property type="protein sequence ID" value="AAA32932.1"/>
    <property type="molecule type" value="mRNA"/>
</dbReference>
<dbReference type="PIR" id="JE0406">
    <property type="entry name" value="JE0406"/>
</dbReference>
<dbReference type="SMR" id="P04750"/>
<dbReference type="IntAct" id="P04750">
    <property type="interactions" value="1"/>
</dbReference>
<dbReference type="CAZy" id="GH13">
    <property type="family name" value="Glycoside Hydrolase Family 13"/>
</dbReference>
<dbReference type="ExpressionAtlas" id="P04750">
    <property type="expression patterns" value="baseline and differential"/>
</dbReference>
<dbReference type="GO" id="GO:0004556">
    <property type="term" value="F:alpha-amylase activity"/>
    <property type="evidence" value="ECO:0007669"/>
    <property type="project" value="UniProtKB-EC"/>
</dbReference>
<dbReference type="GO" id="GO:0005509">
    <property type="term" value="F:calcium ion binding"/>
    <property type="evidence" value="ECO:0007669"/>
    <property type="project" value="InterPro"/>
</dbReference>
<dbReference type="GO" id="GO:0005983">
    <property type="term" value="P:starch catabolic process"/>
    <property type="evidence" value="ECO:0007669"/>
    <property type="project" value="UniProtKB-ARBA"/>
</dbReference>
<dbReference type="CDD" id="cd11314">
    <property type="entry name" value="AmyAc_arch_bac_plant_AmyA"/>
    <property type="match status" value="1"/>
</dbReference>
<dbReference type="FunFam" id="2.60.40.1180:FF:000021">
    <property type="entry name" value="Alpha-amylase"/>
    <property type="match status" value="1"/>
</dbReference>
<dbReference type="Gene3D" id="3.20.20.80">
    <property type="entry name" value="Glycosidases"/>
    <property type="match status" value="1"/>
</dbReference>
<dbReference type="Gene3D" id="2.60.40.1180">
    <property type="entry name" value="Golgi alpha-mannosidase II"/>
    <property type="match status" value="1"/>
</dbReference>
<dbReference type="InterPro" id="IPR012850">
    <property type="entry name" value="A-amylase_bs_C"/>
</dbReference>
<dbReference type="InterPro" id="IPR013775">
    <property type="entry name" value="A-amylase_pln"/>
</dbReference>
<dbReference type="InterPro" id="IPR006046">
    <property type="entry name" value="Alpha_amylase"/>
</dbReference>
<dbReference type="InterPro" id="IPR006047">
    <property type="entry name" value="Glyco_hydro_13_cat_dom"/>
</dbReference>
<dbReference type="InterPro" id="IPR013780">
    <property type="entry name" value="Glyco_hydro_b"/>
</dbReference>
<dbReference type="InterPro" id="IPR017853">
    <property type="entry name" value="Glycoside_hydrolase_SF"/>
</dbReference>
<dbReference type="PANTHER" id="PTHR43447">
    <property type="entry name" value="ALPHA-AMYLASE"/>
    <property type="match status" value="1"/>
</dbReference>
<dbReference type="Pfam" id="PF07821">
    <property type="entry name" value="Alpha-amyl_C2"/>
    <property type="match status" value="1"/>
</dbReference>
<dbReference type="Pfam" id="PF00128">
    <property type="entry name" value="Alpha-amylase"/>
    <property type="match status" value="1"/>
</dbReference>
<dbReference type="PIRSF" id="PIRSF001028">
    <property type="entry name" value="Alph-amls_plant"/>
    <property type="match status" value="1"/>
</dbReference>
<dbReference type="PRINTS" id="PR00110">
    <property type="entry name" value="ALPHAAMYLASE"/>
</dbReference>
<dbReference type="SMART" id="SM00642">
    <property type="entry name" value="Aamy"/>
    <property type="match status" value="1"/>
</dbReference>
<dbReference type="SMART" id="SM00810">
    <property type="entry name" value="Alpha-amyl_C2"/>
    <property type="match status" value="1"/>
</dbReference>
<dbReference type="SUPFAM" id="SSF51445">
    <property type="entry name" value="(Trans)glycosidases"/>
    <property type="match status" value="1"/>
</dbReference>
<dbReference type="SUPFAM" id="SSF51011">
    <property type="entry name" value="Glycosyl hydrolase domain"/>
    <property type="match status" value="1"/>
</dbReference>
<reference key="1">
    <citation type="journal article" date="1989" name="Plant Mol. Biol.">
        <title>Nucleotide and predicted amino acid sequences of two different genes for high-pI alpha-amylases from barley.</title>
        <authorList>
            <person name="Rahmatullah R.J."/>
            <person name="Huang J.-K."/>
            <person name="Clark K.L."/>
            <person name="Reeck G.R."/>
            <person name="Chandra G.R."/>
            <person name="Muthukrishnan S."/>
        </authorList>
    </citation>
    <scope>NUCLEOTIDE SEQUENCE [GENOMIC DNA] (CLONE GRAMY56)</scope>
</reference>
<reference key="2">
    <citation type="journal article" date="1984" name="J. Mol. Appl. Genet.">
        <title>Expression and regulation of alpha-amylase gene family in barley aleurones.</title>
        <authorList>
            <person name="Huang J.-K."/>
            <person name="Swegle M."/>
            <person name="Dandekar A.M."/>
            <person name="Muthukrishnan S."/>
        </authorList>
    </citation>
    <scope>NUCLEOTIDE SEQUENCE [MRNA] OF 380-429 (CLONE 963)</scope>
</reference>
<sequence length="429" mass="47937">MANKHMSLSLFIVLLGLSCSLASGQVLFQGFNWESWKHNGGWYNFLMGKVDDIAAAGVTHVWLPPASQSVAEQGYMPGRLYDLDASKYGNKAQLKSLIGALHGKAVKAIADIVINHRTAERKDGRGIYCIFEGGTPDARLDWGPHMICRDDRPYPDGTGNRPTRTRADFGAAPDIDHLNPRVQKELVEWLNWLRTDDGFDGWRFDFAKGYSADVAKIYVDRSEPSFAVAEIWTSLAYGGDGKPNLNQDPHRQELVNWVNKVGGSGPATTFDFTTKGILNVAVEGELWRLRGTDGKAPGMIGWWPAKAVTFVDNHDTGSTQHMWPFPSDRVMQGYAYILTHPGNPCIFYDHFFDWGLKEEIDRLVSIRTRQGIHSESKLQIMEADADLYLAEIEGKVIVKLGPRYDVGHLIPEGFKVVAHGNDYAVWEKV</sequence>
<name>AMY6_HORVU</name>
<organism>
    <name type="scientific">Hordeum vulgare</name>
    <name type="common">Barley</name>
    <dbReference type="NCBI Taxonomy" id="4513"/>
    <lineage>
        <taxon>Eukaryota</taxon>
        <taxon>Viridiplantae</taxon>
        <taxon>Streptophyta</taxon>
        <taxon>Embryophyta</taxon>
        <taxon>Tracheophyta</taxon>
        <taxon>Spermatophyta</taxon>
        <taxon>Magnoliopsida</taxon>
        <taxon>Liliopsida</taxon>
        <taxon>Poales</taxon>
        <taxon>Poaceae</taxon>
        <taxon>BOP clade</taxon>
        <taxon>Pooideae</taxon>
        <taxon>Triticodae</taxon>
        <taxon>Triticeae</taxon>
        <taxon>Hordeinae</taxon>
        <taxon>Hordeum</taxon>
    </lineage>
</organism>
<feature type="signal peptide">
    <location>
        <begin position="1"/>
        <end position="24"/>
    </location>
</feature>
<feature type="chain" id="PRO_0000001407" description="Alpha-amylase type B isozyme">
    <location>
        <begin position="25"/>
        <end position="429"/>
    </location>
</feature>
<feature type="active site" description="Nucleophile" evidence="2">
    <location>
        <position position="205"/>
    </location>
</feature>
<feature type="active site" description="Proton donor" evidence="2">
    <location>
        <position position="230"/>
    </location>
</feature>
<feature type="binding site" evidence="2">
    <location>
        <begin position="68"/>
        <end position="70"/>
    </location>
    <ligand>
        <name>substrate</name>
    </ligand>
</feature>
<feature type="binding site" evidence="2">
    <location>
        <begin position="75"/>
        <end position="76"/>
    </location>
    <ligand>
        <name>substrate</name>
    </ligand>
</feature>
<feature type="binding site" evidence="2">
    <location>
        <position position="115"/>
    </location>
    <ligand>
        <name>Ca(2+)</name>
        <dbReference type="ChEBI" id="CHEBI:29108"/>
        <label>1</label>
    </ligand>
</feature>
<feature type="binding site" evidence="2">
    <location>
        <position position="132"/>
    </location>
    <ligand>
        <name>Ca(2+)</name>
        <dbReference type="ChEBI" id="CHEBI:29108"/>
        <label>2</label>
    </ligand>
</feature>
<feature type="binding site" evidence="2">
    <location>
        <position position="135"/>
    </location>
    <ligand>
        <name>Ca(2+)</name>
        <dbReference type="ChEBI" id="CHEBI:29108"/>
        <label>2</label>
    </ligand>
</feature>
<feature type="binding site" evidence="2">
    <location>
        <position position="137"/>
    </location>
    <ligand>
        <name>Ca(2+)</name>
        <dbReference type="ChEBI" id="CHEBI:29108"/>
        <label>2</label>
    </ligand>
</feature>
<feature type="binding site" evidence="2">
    <location>
        <position position="141"/>
    </location>
    <ligand>
        <name>Ca(2+)</name>
        <dbReference type="ChEBI" id="CHEBI:29108"/>
        <label>2</label>
    </ligand>
</feature>
<feature type="binding site" evidence="2">
    <location>
        <position position="151"/>
    </location>
    <ligand>
        <name>Ca(2+)</name>
        <dbReference type="ChEBI" id="CHEBI:29108"/>
        <label>3</label>
    </ligand>
</feature>
<feature type="binding site" evidence="2">
    <location>
        <position position="167"/>
    </location>
    <ligand>
        <name>Ca(2+)</name>
        <dbReference type="ChEBI" id="CHEBI:29108"/>
        <label>1</label>
    </ligand>
</feature>
<feature type="binding site" evidence="2">
    <location>
        <position position="168"/>
    </location>
    <ligand>
        <name>Ca(2+)</name>
        <dbReference type="ChEBI" id="CHEBI:29108"/>
        <label>3</label>
    </ligand>
</feature>
<feature type="binding site" evidence="2">
    <location>
        <position position="169"/>
    </location>
    <ligand>
        <name>Ca(2+)</name>
        <dbReference type="ChEBI" id="CHEBI:29108"/>
        <label>3</label>
    </ligand>
</feature>
<feature type="binding site" evidence="2">
    <location>
        <position position="172"/>
    </location>
    <ligand>
        <name>Ca(2+)</name>
        <dbReference type="ChEBI" id="CHEBI:29108"/>
        <label>3</label>
    </ligand>
</feature>
<feature type="binding site" evidence="2">
    <location>
        <position position="174"/>
    </location>
    <ligand>
        <name>Ca(2+)</name>
        <dbReference type="ChEBI" id="CHEBI:29108"/>
        <label>1</label>
    </ligand>
</feature>
<feature type="binding site" evidence="2">
    <location>
        <position position="174"/>
    </location>
    <ligand>
        <name>Ca(2+)</name>
        <dbReference type="ChEBI" id="CHEBI:29108"/>
        <label>3</label>
    </ligand>
</feature>
<feature type="binding site" evidence="2">
    <location>
        <begin position="203"/>
        <end position="208"/>
    </location>
    <ligand>
        <name>substrate</name>
    </ligand>
</feature>
<feature type="binding site" evidence="2">
    <location>
        <position position="209"/>
    </location>
    <ligand>
        <name>Ca(2+)</name>
        <dbReference type="ChEBI" id="CHEBI:29108"/>
        <label>1</label>
    </ligand>
</feature>
<feature type="binding site" evidence="2">
    <location>
        <position position="232"/>
    </location>
    <ligand>
        <name>substrate</name>
    </ligand>
</feature>
<feature type="binding site" evidence="3">
    <location>
        <position position="234"/>
    </location>
    <ligand>
        <name>substrate</name>
    </ligand>
</feature>
<feature type="binding site" evidence="2">
    <location>
        <position position="252"/>
    </location>
    <ligand>
        <name>substrate</name>
    </ligand>
</feature>
<feature type="binding site" evidence="2">
    <location>
        <position position="295"/>
    </location>
    <ligand>
        <name>substrate</name>
    </ligand>
</feature>
<feature type="binding site" evidence="2">
    <location>
        <begin position="301"/>
        <end position="303"/>
    </location>
    <ligand>
        <name>substrate</name>
    </ligand>
</feature>
<feature type="binding site" evidence="2">
    <location>
        <position position="314"/>
    </location>
    <ligand>
        <name>substrate</name>
    </ligand>
</feature>
<feature type="binding site" evidence="2">
    <location>
        <position position="320"/>
    </location>
    <ligand>
        <name>substrate</name>
    </ligand>
</feature>
<feature type="binding site" evidence="2">
    <location>
        <position position="399"/>
    </location>
    <ligand>
        <name>substrate</name>
    </ligand>
</feature>
<feature type="binding site" evidence="2">
    <location>
        <begin position="404"/>
        <end position="406"/>
    </location>
    <ligand>
        <name>substrate</name>
    </ligand>
</feature>
<feature type="binding site" evidence="2">
    <location>
        <begin position="416"/>
        <end position="422"/>
    </location>
    <ligand>
        <name>substrate</name>
    </ligand>
</feature>
<feature type="binding site" evidence="2">
    <location>
        <position position="426"/>
    </location>
    <ligand>
        <name>substrate</name>
    </ligand>
</feature>
<feature type="site" description="Transition state stabilizer" evidence="2">
    <location>
        <position position="315"/>
    </location>
</feature>